<dbReference type="EMBL" id="CP000140">
    <property type="protein sequence ID" value="ABR44080.1"/>
    <property type="status" value="ALT_FRAME"/>
    <property type="molecule type" value="Genomic_DNA"/>
</dbReference>
<dbReference type="SMR" id="A6LEG6"/>
<dbReference type="STRING" id="435591.BDI_2355"/>
<dbReference type="PaxDb" id="435591-BDI_2355"/>
<dbReference type="KEGG" id="pdi:BDI_2355"/>
<dbReference type="eggNOG" id="COG0522">
    <property type="taxonomic scope" value="Bacteria"/>
</dbReference>
<dbReference type="HOGENOM" id="CLU_092403_0_2_10"/>
<dbReference type="Proteomes" id="UP000000566">
    <property type="component" value="Chromosome"/>
</dbReference>
<dbReference type="GO" id="GO:0015935">
    <property type="term" value="C:small ribosomal subunit"/>
    <property type="evidence" value="ECO:0007669"/>
    <property type="project" value="InterPro"/>
</dbReference>
<dbReference type="GO" id="GO:0019843">
    <property type="term" value="F:rRNA binding"/>
    <property type="evidence" value="ECO:0007669"/>
    <property type="project" value="UniProtKB-UniRule"/>
</dbReference>
<dbReference type="GO" id="GO:0003735">
    <property type="term" value="F:structural constituent of ribosome"/>
    <property type="evidence" value="ECO:0007669"/>
    <property type="project" value="InterPro"/>
</dbReference>
<dbReference type="GO" id="GO:0042274">
    <property type="term" value="P:ribosomal small subunit biogenesis"/>
    <property type="evidence" value="ECO:0007669"/>
    <property type="project" value="TreeGrafter"/>
</dbReference>
<dbReference type="GO" id="GO:0006412">
    <property type="term" value="P:translation"/>
    <property type="evidence" value="ECO:0007669"/>
    <property type="project" value="UniProtKB-UniRule"/>
</dbReference>
<dbReference type="CDD" id="cd00165">
    <property type="entry name" value="S4"/>
    <property type="match status" value="1"/>
</dbReference>
<dbReference type="FunFam" id="1.10.1050.10:FF:000001">
    <property type="entry name" value="30S ribosomal protein S4"/>
    <property type="match status" value="1"/>
</dbReference>
<dbReference type="FunFam" id="3.10.290.10:FF:000001">
    <property type="entry name" value="30S ribosomal protein S4"/>
    <property type="match status" value="1"/>
</dbReference>
<dbReference type="Gene3D" id="1.10.1050.10">
    <property type="entry name" value="Ribosomal Protein S4 Delta 41, Chain A, domain 1"/>
    <property type="match status" value="1"/>
</dbReference>
<dbReference type="Gene3D" id="3.10.290.10">
    <property type="entry name" value="RNA-binding S4 domain"/>
    <property type="match status" value="1"/>
</dbReference>
<dbReference type="HAMAP" id="MF_01306_B">
    <property type="entry name" value="Ribosomal_uS4_B"/>
    <property type="match status" value="1"/>
</dbReference>
<dbReference type="InterPro" id="IPR022801">
    <property type="entry name" value="Ribosomal_uS4"/>
</dbReference>
<dbReference type="InterPro" id="IPR005709">
    <property type="entry name" value="Ribosomal_uS4_bac-type"/>
</dbReference>
<dbReference type="InterPro" id="IPR018079">
    <property type="entry name" value="Ribosomal_uS4_CS"/>
</dbReference>
<dbReference type="InterPro" id="IPR001912">
    <property type="entry name" value="Ribosomal_uS4_N"/>
</dbReference>
<dbReference type="InterPro" id="IPR002942">
    <property type="entry name" value="S4_RNA-bd"/>
</dbReference>
<dbReference type="InterPro" id="IPR036986">
    <property type="entry name" value="S4_RNA-bd_sf"/>
</dbReference>
<dbReference type="NCBIfam" id="NF003717">
    <property type="entry name" value="PRK05327.1"/>
    <property type="match status" value="1"/>
</dbReference>
<dbReference type="NCBIfam" id="TIGR01017">
    <property type="entry name" value="rpsD_bact"/>
    <property type="match status" value="1"/>
</dbReference>
<dbReference type="PANTHER" id="PTHR11831">
    <property type="entry name" value="30S 40S RIBOSOMAL PROTEIN"/>
    <property type="match status" value="1"/>
</dbReference>
<dbReference type="PANTHER" id="PTHR11831:SF4">
    <property type="entry name" value="SMALL RIBOSOMAL SUBUNIT PROTEIN US4M"/>
    <property type="match status" value="1"/>
</dbReference>
<dbReference type="Pfam" id="PF00163">
    <property type="entry name" value="Ribosomal_S4"/>
    <property type="match status" value="1"/>
</dbReference>
<dbReference type="Pfam" id="PF01479">
    <property type="entry name" value="S4"/>
    <property type="match status" value="1"/>
</dbReference>
<dbReference type="SMART" id="SM01390">
    <property type="entry name" value="Ribosomal_S4"/>
    <property type="match status" value="1"/>
</dbReference>
<dbReference type="SMART" id="SM00363">
    <property type="entry name" value="S4"/>
    <property type="match status" value="1"/>
</dbReference>
<dbReference type="SUPFAM" id="SSF55174">
    <property type="entry name" value="Alpha-L RNA-binding motif"/>
    <property type="match status" value="1"/>
</dbReference>
<dbReference type="PROSITE" id="PS00632">
    <property type="entry name" value="RIBOSOMAL_S4"/>
    <property type="match status" value="1"/>
</dbReference>
<dbReference type="PROSITE" id="PS50889">
    <property type="entry name" value="S4"/>
    <property type="match status" value="1"/>
</dbReference>
<protein>
    <recommendedName>
        <fullName evidence="1">Small ribosomal subunit protein uS4</fullName>
    </recommendedName>
    <alternativeName>
        <fullName evidence="3">30S ribosomal protein S4</fullName>
    </alternativeName>
</protein>
<comment type="function">
    <text evidence="1">One of the primary rRNA binding proteins, it binds directly to 16S rRNA where it nucleates assembly of the body of the 30S subunit.</text>
</comment>
<comment type="function">
    <text evidence="1">With S5 and S12 plays an important role in translational accuracy.</text>
</comment>
<comment type="subunit">
    <text evidence="1">Part of the 30S ribosomal subunit. Contacts protein S5. The interaction surface between S4 and S5 is involved in control of translational fidelity.</text>
</comment>
<comment type="similarity">
    <text evidence="1">Belongs to the universal ribosomal protein uS4 family.</text>
</comment>
<comment type="sequence caution" evidence="3">
    <conflict type="frameshift">
        <sequence resource="EMBL-CDS" id="ABR44080"/>
    </conflict>
</comment>
<evidence type="ECO:0000255" key="1">
    <source>
        <dbReference type="HAMAP-Rule" id="MF_01306"/>
    </source>
</evidence>
<evidence type="ECO:0000256" key="2">
    <source>
        <dbReference type="SAM" id="MobiDB-lite"/>
    </source>
</evidence>
<evidence type="ECO:0000305" key="3"/>
<reference key="1">
    <citation type="journal article" date="2007" name="PLoS Biol.">
        <title>Evolution of symbiotic bacteria in the distal human intestine.</title>
        <authorList>
            <person name="Xu J."/>
            <person name="Mahowald M.A."/>
            <person name="Ley R.E."/>
            <person name="Lozupone C.A."/>
            <person name="Hamady M."/>
            <person name="Martens E.C."/>
            <person name="Henrissat B."/>
            <person name="Coutinho P.M."/>
            <person name="Minx P."/>
            <person name="Latreille P."/>
            <person name="Cordum H."/>
            <person name="Van Brunt A."/>
            <person name="Kim K."/>
            <person name="Fulton R.S."/>
            <person name="Fulton L.A."/>
            <person name="Clifton S.W."/>
            <person name="Wilson R.K."/>
            <person name="Knight R.D."/>
            <person name="Gordon J.I."/>
        </authorList>
    </citation>
    <scope>NUCLEOTIDE SEQUENCE [LARGE SCALE GENOMIC DNA]</scope>
    <source>
        <strain>ATCC 8503 / DSM 20701 / CIP 104284 / JCM 5825 / NCTC 11152</strain>
    </source>
</reference>
<sequence length="201" mass="22740">MARYTGPRTRIARKFGEAIFGADKVLSKKNYPPGQHGNSRKRKTSEYGIQLREKQKAKYTYGVLEKQFRNLFEKASRSKGITGEVLLQLLEGRLDNVVYRLGIAPTRAAARQLVSHRHITVDGSVVNIPSYSVKPGQVIGVREKSKSMEVIADALSGFNHSQYPWIEWDQSSMSGKLLHLPERADIPENIKEQLIVELYSK</sequence>
<feature type="chain" id="PRO_0000322316" description="Small ribosomal subunit protein uS4">
    <location>
        <begin position="1"/>
        <end position="201"/>
    </location>
</feature>
<feature type="domain" description="S4 RNA-binding" evidence="1">
    <location>
        <begin position="92"/>
        <end position="152"/>
    </location>
</feature>
<feature type="region of interest" description="Disordered" evidence="2">
    <location>
        <begin position="27"/>
        <end position="47"/>
    </location>
</feature>
<organism>
    <name type="scientific">Parabacteroides distasonis (strain ATCC 8503 / DSM 20701 / CIP 104284 / JCM 5825 / NCTC 11152)</name>
    <dbReference type="NCBI Taxonomy" id="435591"/>
    <lineage>
        <taxon>Bacteria</taxon>
        <taxon>Pseudomonadati</taxon>
        <taxon>Bacteroidota</taxon>
        <taxon>Bacteroidia</taxon>
        <taxon>Bacteroidales</taxon>
        <taxon>Tannerellaceae</taxon>
        <taxon>Parabacteroides</taxon>
    </lineage>
</organism>
<proteinExistence type="inferred from homology"/>
<accession>A6LEG6</accession>
<name>RS4_PARD8</name>
<gene>
    <name evidence="1" type="primary">rpsD</name>
    <name type="ordered locus">BDI_2355</name>
</gene>
<keyword id="KW-1185">Reference proteome</keyword>
<keyword id="KW-0687">Ribonucleoprotein</keyword>
<keyword id="KW-0689">Ribosomal protein</keyword>
<keyword id="KW-0694">RNA-binding</keyword>
<keyword id="KW-0699">rRNA-binding</keyword>